<dbReference type="EMBL" id="BX548174">
    <property type="protein sequence ID" value="CAE20116.1"/>
    <property type="molecule type" value="Genomic_DNA"/>
</dbReference>
<dbReference type="RefSeq" id="WP_011133284.1">
    <property type="nucleotide sequence ID" value="NC_005072.1"/>
</dbReference>
<dbReference type="SMR" id="Q7UZK6"/>
<dbReference type="STRING" id="59919.PMM1657"/>
<dbReference type="KEGG" id="pmm:PMM1657"/>
<dbReference type="eggNOG" id="COG1219">
    <property type="taxonomic scope" value="Bacteria"/>
</dbReference>
<dbReference type="HOGENOM" id="CLU_014218_8_2_3"/>
<dbReference type="OrthoDB" id="9804062at2"/>
<dbReference type="Proteomes" id="UP000001026">
    <property type="component" value="Chromosome"/>
</dbReference>
<dbReference type="GO" id="GO:0009376">
    <property type="term" value="C:HslUV protease complex"/>
    <property type="evidence" value="ECO:0007669"/>
    <property type="project" value="TreeGrafter"/>
</dbReference>
<dbReference type="GO" id="GO:0005524">
    <property type="term" value="F:ATP binding"/>
    <property type="evidence" value="ECO:0007669"/>
    <property type="project" value="UniProtKB-UniRule"/>
</dbReference>
<dbReference type="GO" id="GO:0016887">
    <property type="term" value="F:ATP hydrolysis activity"/>
    <property type="evidence" value="ECO:0007669"/>
    <property type="project" value="InterPro"/>
</dbReference>
<dbReference type="GO" id="GO:0140662">
    <property type="term" value="F:ATP-dependent protein folding chaperone"/>
    <property type="evidence" value="ECO:0007669"/>
    <property type="project" value="InterPro"/>
</dbReference>
<dbReference type="GO" id="GO:0046983">
    <property type="term" value="F:protein dimerization activity"/>
    <property type="evidence" value="ECO:0007669"/>
    <property type="project" value="InterPro"/>
</dbReference>
<dbReference type="GO" id="GO:0051082">
    <property type="term" value="F:unfolded protein binding"/>
    <property type="evidence" value="ECO:0007669"/>
    <property type="project" value="UniProtKB-UniRule"/>
</dbReference>
<dbReference type="GO" id="GO:0008270">
    <property type="term" value="F:zinc ion binding"/>
    <property type="evidence" value="ECO:0007669"/>
    <property type="project" value="InterPro"/>
</dbReference>
<dbReference type="GO" id="GO:0051301">
    <property type="term" value="P:cell division"/>
    <property type="evidence" value="ECO:0007669"/>
    <property type="project" value="TreeGrafter"/>
</dbReference>
<dbReference type="GO" id="GO:0051603">
    <property type="term" value="P:proteolysis involved in protein catabolic process"/>
    <property type="evidence" value="ECO:0007669"/>
    <property type="project" value="TreeGrafter"/>
</dbReference>
<dbReference type="CDD" id="cd19497">
    <property type="entry name" value="RecA-like_ClpX"/>
    <property type="match status" value="1"/>
</dbReference>
<dbReference type="FunFam" id="1.10.8.60:FF:000002">
    <property type="entry name" value="ATP-dependent Clp protease ATP-binding subunit ClpX"/>
    <property type="match status" value="1"/>
</dbReference>
<dbReference type="FunFam" id="3.40.50.300:FF:000005">
    <property type="entry name" value="ATP-dependent Clp protease ATP-binding subunit ClpX"/>
    <property type="match status" value="1"/>
</dbReference>
<dbReference type="Gene3D" id="1.10.8.60">
    <property type="match status" value="1"/>
</dbReference>
<dbReference type="Gene3D" id="6.20.220.10">
    <property type="entry name" value="ClpX chaperone, C4-type zinc finger domain"/>
    <property type="match status" value="1"/>
</dbReference>
<dbReference type="Gene3D" id="3.40.50.300">
    <property type="entry name" value="P-loop containing nucleotide triphosphate hydrolases"/>
    <property type="match status" value="1"/>
</dbReference>
<dbReference type="HAMAP" id="MF_00175">
    <property type="entry name" value="ClpX"/>
    <property type="match status" value="1"/>
</dbReference>
<dbReference type="InterPro" id="IPR003593">
    <property type="entry name" value="AAA+_ATPase"/>
</dbReference>
<dbReference type="InterPro" id="IPR050052">
    <property type="entry name" value="ATP-dep_Clp_protease_ClpX"/>
</dbReference>
<dbReference type="InterPro" id="IPR003959">
    <property type="entry name" value="ATPase_AAA_core"/>
</dbReference>
<dbReference type="InterPro" id="IPR019489">
    <property type="entry name" value="Clp_ATPase_C"/>
</dbReference>
<dbReference type="InterPro" id="IPR004487">
    <property type="entry name" value="Clp_protease_ATP-bd_su_ClpX"/>
</dbReference>
<dbReference type="InterPro" id="IPR046425">
    <property type="entry name" value="ClpX_bact"/>
</dbReference>
<dbReference type="InterPro" id="IPR027417">
    <property type="entry name" value="P-loop_NTPase"/>
</dbReference>
<dbReference type="InterPro" id="IPR010603">
    <property type="entry name" value="Znf_CppX_C4"/>
</dbReference>
<dbReference type="InterPro" id="IPR038366">
    <property type="entry name" value="Znf_CppX_C4_sf"/>
</dbReference>
<dbReference type="NCBIfam" id="TIGR00382">
    <property type="entry name" value="clpX"/>
    <property type="match status" value="1"/>
</dbReference>
<dbReference type="NCBIfam" id="NF003745">
    <property type="entry name" value="PRK05342.1"/>
    <property type="match status" value="1"/>
</dbReference>
<dbReference type="PANTHER" id="PTHR48102:SF7">
    <property type="entry name" value="ATP-DEPENDENT CLP PROTEASE ATP-BINDING SUBUNIT CLPX-LIKE, MITOCHONDRIAL"/>
    <property type="match status" value="1"/>
</dbReference>
<dbReference type="PANTHER" id="PTHR48102">
    <property type="entry name" value="ATP-DEPENDENT CLP PROTEASE ATP-BINDING SUBUNIT CLPX-LIKE, MITOCHONDRIAL-RELATED"/>
    <property type="match status" value="1"/>
</dbReference>
<dbReference type="Pfam" id="PF07724">
    <property type="entry name" value="AAA_2"/>
    <property type="match status" value="1"/>
</dbReference>
<dbReference type="Pfam" id="PF10431">
    <property type="entry name" value="ClpB_D2-small"/>
    <property type="match status" value="1"/>
</dbReference>
<dbReference type="Pfam" id="PF06689">
    <property type="entry name" value="zf-C4_ClpX"/>
    <property type="match status" value="1"/>
</dbReference>
<dbReference type="SMART" id="SM00382">
    <property type="entry name" value="AAA"/>
    <property type="match status" value="1"/>
</dbReference>
<dbReference type="SMART" id="SM01086">
    <property type="entry name" value="ClpB_D2-small"/>
    <property type="match status" value="1"/>
</dbReference>
<dbReference type="SMART" id="SM00994">
    <property type="entry name" value="zf-C4_ClpX"/>
    <property type="match status" value="1"/>
</dbReference>
<dbReference type="SUPFAM" id="SSF57716">
    <property type="entry name" value="Glucocorticoid receptor-like (DNA-binding domain)"/>
    <property type="match status" value="1"/>
</dbReference>
<dbReference type="SUPFAM" id="SSF52540">
    <property type="entry name" value="P-loop containing nucleoside triphosphate hydrolases"/>
    <property type="match status" value="1"/>
</dbReference>
<dbReference type="PROSITE" id="PS51902">
    <property type="entry name" value="CLPX_ZB"/>
    <property type="match status" value="1"/>
</dbReference>
<gene>
    <name evidence="1" type="primary">clpX</name>
    <name type="ordered locus">PMM1657</name>
</gene>
<organism>
    <name type="scientific">Prochlorococcus marinus subsp. pastoris (strain CCMP1986 / NIES-2087 / MED4)</name>
    <dbReference type="NCBI Taxonomy" id="59919"/>
    <lineage>
        <taxon>Bacteria</taxon>
        <taxon>Bacillati</taxon>
        <taxon>Cyanobacteriota</taxon>
        <taxon>Cyanophyceae</taxon>
        <taxon>Synechococcales</taxon>
        <taxon>Prochlorococcaceae</taxon>
        <taxon>Prochlorococcus</taxon>
    </lineage>
</organism>
<evidence type="ECO:0000255" key="1">
    <source>
        <dbReference type="HAMAP-Rule" id="MF_00175"/>
    </source>
</evidence>
<evidence type="ECO:0000255" key="2">
    <source>
        <dbReference type="PROSITE-ProRule" id="PRU01250"/>
    </source>
</evidence>
<sequence>MAKFDAHLKCSFCGKSQDQVRKLIAGPGVYICDECIDLCNEILDEELIDTQAKINNSPQVKKKLPTNNSDKSIPLELTSIPKPLEIKTFLDNQVVGQESAKKILSVAVYNHYKRLAWRLKEENKENDSNDLQATKLQKSNILLIGPTGSGKTLLAQTLAEFLDVPFAVADATSLTEAGYVGEDVENILLRLLQKSEMNVDLAQKGIIYIDEIDKIARKSENPSITRDVSGEGVQQALLKMLEGTIANVPPQGGRKHPNHDCIQIDTSQILFICGGAFIGLEDIVQKRLGKNSIGFTTNPDESKINAKKIIDSRDALKNLEQDDLVKYGLIPEFIGRIPVCAVLDRLSKETLESILTEPRDALVKQFKTLLSMDNVELNFEPESVEAIANEAFKRKTGARALRSIIEELMLDLMYTLPSQEEVKEFIITKKMVDKLFLSKIVKLPAGSQRIIKESA</sequence>
<keyword id="KW-0067">ATP-binding</keyword>
<keyword id="KW-0143">Chaperone</keyword>
<keyword id="KW-0479">Metal-binding</keyword>
<keyword id="KW-0547">Nucleotide-binding</keyword>
<keyword id="KW-0862">Zinc</keyword>
<proteinExistence type="inferred from homology"/>
<feature type="chain" id="PRO_0000160403" description="ATP-dependent Clp protease ATP-binding subunit ClpX">
    <location>
        <begin position="1"/>
        <end position="455"/>
    </location>
</feature>
<feature type="domain" description="ClpX-type ZB" evidence="2">
    <location>
        <begin position="1"/>
        <end position="51"/>
    </location>
</feature>
<feature type="binding site" evidence="2">
    <location>
        <position position="10"/>
    </location>
    <ligand>
        <name>Zn(2+)</name>
        <dbReference type="ChEBI" id="CHEBI:29105"/>
    </ligand>
</feature>
<feature type="binding site" evidence="2">
    <location>
        <position position="13"/>
    </location>
    <ligand>
        <name>Zn(2+)</name>
        <dbReference type="ChEBI" id="CHEBI:29105"/>
    </ligand>
</feature>
<feature type="binding site" evidence="2">
    <location>
        <position position="32"/>
    </location>
    <ligand>
        <name>Zn(2+)</name>
        <dbReference type="ChEBI" id="CHEBI:29105"/>
    </ligand>
</feature>
<feature type="binding site" evidence="2">
    <location>
        <position position="35"/>
    </location>
    <ligand>
        <name>Zn(2+)</name>
        <dbReference type="ChEBI" id="CHEBI:29105"/>
    </ligand>
</feature>
<feature type="binding site" evidence="1">
    <location>
        <begin position="146"/>
        <end position="153"/>
    </location>
    <ligand>
        <name>ATP</name>
        <dbReference type="ChEBI" id="CHEBI:30616"/>
    </ligand>
</feature>
<comment type="function">
    <text evidence="1">ATP-dependent specificity component of the Clp protease. It directs the protease to specific substrates. Can perform chaperone functions in the absence of ClpP.</text>
</comment>
<comment type="subunit">
    <text evidence="1">Component of the ClpX-ClpP complex. Forms a hexameric ring that, in the presence of ATP, binds to fourteen ClpP subunits assembled into a disk-like structure with a central cavity, resembling the structure of eukaryotic proteasomes.</text>
</comment>
<comment type="similarity">
    <text evidence="1">Belongs to the ClpX chaperone family.</text>
</comment>
<protein>
    <recommendedName>
        <fullName evidence="1">ATP-dependent Clp protease ATP-binding subunit ClpX</fullName>
    </recommendedName>
</protein>
<accession>Q7UZK6</accession>
<reference key="1">
    <citation type="journal article" date="2003" name="Nature">
        <title>Genome divergence in two Prochlorococcus ecotypes reflects oceanic niche differentiation.</title>
        <authorList>
            <person name="Rocap G."/>
            <person name="Larimer F.W."/>
            <person name="Lamerdin J.E."/>
            <person name="Malfatti S."/>
            <person name="Chain P."/>
            <person name="Ahlgren N.A."/>
            <person name="Arellano A."/>
            <person name="Coleman M."/>
            <person name="Hauser L."/>
            <person name="Hess W.R."/>
            <person name="Johnson Z.I."/>
            <person name="Land M.L."/>
            <person name="Lindell D."/>
            <person name="Post A.F."/>
            <person name="Regala W."/>
            <person name="Shah M."/>
            <person name="Shaw S.L."/>
            <person name="Steglich C."/>
            <person name="Sullivan M.B."/>
            <person name="Ting C.S."/>
            <person name="Tolonen A."/>
            <person name="Webb E.A."/>
            <person name="Zinser E.R."/>
            <person name="Chisholm S.W."/>
        </authorList>
    </citation>
    <scope>NUCLEOTIDE SEQUENCE [LARGE SCALE GENOMIC DNA]</scope>
    <source>
        <strain>CCMP1986 / NIES-2087 / MED4</strain>
    </source>
</reference>
<name>CLPX_PROMP</name>